<name>SSRB_CAEEL</name>
<gene>
    <name evidence="5" type="primary">trap-2</name>
    <name type="ORF">T04G9.5</name>
</gene>
<evidence type="ECO:0000250" key="1">
    <source>
        <dbReference type="UniProtKB" id="P43308"/>
    </source>
</evidence>
<evidence type="ECO:0000255" key="2"/>
<evidence type="ECO:0000269" key="3">
    <source>
    </source>
</evidence>
<evidence type="ECO:0000305" key="4"/>
<evidence type="ECO:0000312" key="5">
    <source>
        <dbReference type="WormBase" id="T04G9.5"/>
    </source>
</evidence>
<proteinExistence type="evidence at protein level"/>
<organism>
    <name type="scientific">Caenorhabditis elegans</name>
    <dbReference type="NCBI Taxonomy" id="6239"/>
    <lineage>
        <taxon>Eukaryota</taxon>
        <taxon>Metazoa</taxon>
        <taxon>Ecdysozoa</taxon>
        <taxon>Nematoda</taxon>
        <taxon>Chromadorea</taxon>
        <taxon>Rhabditida</taxon>
        <taxon>Rhabditina</taxon>
        <taxon>Rhabditomorpha</taxon>
        <taxon>Rhabditoidea</taxon>
        <taxon>Rhabditidae</taxon>
        <taxon>Peloderinae</taxon>
        <taxon>Caenorhabditis</taxon>
    </lineage>
</organism>
<reference key="1">
    <citation type="journal article" date="1998" name="Science">
        <title>Genome sequence of the nematode C. elegans: a platform for investigating biology.</title>
        <authorList>
            <consortium name="The C. elegans sequencing consortium"/>
        </authorList>
    </citation>
    <scope>NUCLEOTIDE SEQUENCE [LARGE SCALE GENOMIC DNA]</scope>
    <source>
        <strain>Bristol N2</strain>
    </source>
</reference>
<reference evidence="4" key="2">
    <citation type="journal article" date="2005" name="Glycobiology">
        <title>Identification of the hydrophobic glycoproteins of Caenorhabditis elegans.</title>
        <authorList>
            <person name="Fan X."/>
            <person name="She Y.-M."/>
            <person name="Bagshaw R.D."/>
            <person name="Callahan J.W."/>
            <person name="Schachter H."/>
            <person name="Mahuran D.J."/>
        </authorList>
    </citation>
    <scope>GLYCOSYLATION [LARGE SCALE ANALYSIS] AT ASN-93</scope>
    <scope>IDENTIFICATION BY MASS SPECTROMETRY</scope>
</reference>
<comment type="function">
    <text evidence="1">TRAP proteins are part of a complex whose function is to bind calcium to the ER membrane and thereby regulate the retention of ER resident proteins.</text>
</comment>
<comment type="subunit">
    <text evidence="1">Heterotetramer of TRAP-alpha, TRAP-beta, TRAP-delta and TRAP-gamma.</text>
</comment>
<comment type="subcellular location">
    <subcellularLocation>
        <location evidence="1">Endoplasmic reticulum membrane</location>
        <topology evidence="1">Single-pass type I membrane protein</topology>
    </subcellularLocation>
</comment>
<comment type="similarity">
    <text evidence="2">Belongs to the TRAP-beta family.</text>
</comment>
<sequence length="188" mass="21563">MKFSLFALLFVVVSCVDVGTQTRDAFILAHKQPLSTYAVENMDFVLEYGLYNVGDKPAQKVTIDDRHSFPTNSFDIVKGLLFVHFEQIPAGSNVTHSVVIRPRAFGFFNYTAAQVTYYTDNENHHVTLTNTPGEGYIYRQREYDRRFAPKYTYFLVFFLIVAPTTLGSFLLFQQSKARFPNVIKKKST</sequence>
<dbReference type="EMBL" id="FO080299">
    <property type="protein sequence ID" value="CCD62717.1"/>
    <property type="molecule type" value="Genomic_DNA"/>
</dbReference>
<dbReference type="PIR" id="G89450">
    <property type="entry name" value="G89450"/>
</dbReference>
<dbReference type="RefSeq" id="NP_508150.1">
    <property type="nucleotide sequence ID" value="NM_075749.8"/>
</dbReference>
<dbReference type="SMR" id="Q22169"/>
<dbReference type="BioGRID" id="45375">
    <property type="interactions" value="8"/>
</dbReference>
<dbReference type="FunCoup" id="Q22169">
    <property type="interactions" value="1551"/>
</dbReference>
<dbReference type="STRING" id="6239.T04G9.5.1"/>
<dbReference type="GlyCosmos" id="Q22169">
    <property type="glycosylation" value="2 sites, No reported glycans"/>
</dbReference>
<dbReference type="iPTMnet" id="Q22169"/>
<dbReference type="PaxDb" id="6239-T04G9.5"/>
<dbReference type="PeptideAtlas" id="Q22169"/>
<dbReference type="EnsemblMetazoa" id="T04G9.5.1">
    <property type="protein sequence ID" value="T04G9.5.1"/>
    <property type="gene ID" value="WBGene00020216"/>
</dbReference>
<dbReference type="GeneID" id="180422"/>
<dbReference type="KEGG" id="cel:CELE_T04G9.5"/>
<dbReference type="UCSC" id="T04G9.5.1">
    <property type="organism name" value="c. elegans"/>
</dbReference>
<dbReference type="AGR" id="WB:WBGene00020216"/>
<dbReference type="CTD" id="180422"/>
<dbReference type="WormBase" id="T04G9.5">
    <property type="protein sequence ID" value="CE04886"/>
    <property type="gene ID" value="WBGene00020216"/>
    <property type="gene designation" value="trap-2"/>
</dbReference>
<dbReference type="eggNOG" id="KOG3317">
    <property type="taxonomic scope" value="Eukaryota"/>
</dbReference>
<dbReference type="GeneTree" id="ENSGT00390000005125"/>
<dbReference type="HOGENOM" id="CLU_102025_1_0_1"/>
<dbReference type="InParanoid" id="Q22169"/>
<dbReference type="OMA" id="ILWHSSK"/>
<dbReference type="OrthoDB" id="5860827at2759"/>
<dbReference type="PhylomeDB" id="Q22169"/>
<dbReference type="PRO" id="PR:Q22169"/>
<dbReference type="Proteomes" id="UP000001940">
    <property type="component" value="Chromosome X"/>
</dbReference>
<dbReference type="Bgee" id="WBGene00020216">
    <property type="expression patterns" value="Expressed in pharyngeal muscle cell (C elegans) and 4 other cell types or tissues"/>
</dbReference>
<dbReference type="GO" id="GO:0005789">
    <property type="term" value="C:endoplasmic reticulum membrane"/>
    <property type="evidence" value="ECO:0007669"/>
    <property type="project" value="UniProtKB-SubCell"/>
</dbReference>
<dbReference type="InterPro" id="IPR008856">
    <property type="entry name" value="TRAP_beta"/>
</dbReference>
<dbReference type="PANTHER" id="PTHR12861:SF3">
    <property type="entry name" value="TRANSLOCON-ASSOCIATED PROTEIN SUBUNIT BETA"/>
    <property type="match status" value="1"/>
</dbReference>
<dbReference type="PANTHER" id="PTHR12861">
    <property type="entry name" value="TRANSLOCON-ASSOCIATED PROTEIN, BETA SUBUNIT PRECURSOR TRAP-BETA SIGNAL SEQUENCE RECEPTOR BETA SUBUNIT"/>
    <property type="match status" value="1"/>
</dbReference>
<dbReference type="Pfam" id="PF05753">
    <property type="entry name" value="TRAP_beta"/>
    <property type="match status" value="1"/>
</dbReference>
<dbReference type="PIRSF" id="PIRSF016400">
    <property type="entry name" value="TRAP_beta"/>
    <property type="match status" value="1"/>
</dbReference>
<accession>Q22169</accession>
<keyword id="KW-0256">Endoplasmic reticulum</keyword>
<keyword id="KW-0325">Glycoprotein</keyword>
<keyword id="KW-0472">Membrane</keyword>
<keyword id="KW-1185">Reference proteome</keyword>
<keyword id="KW-0732">Signal</keyword>
<keyword id="KW-0812">Transmembrane</keyword>
<keyword id="KW-1133">Transmembrane helix</keyword>
<feature type="signal peptide" evidence="2">
    <location>
        <begin position="1"/>
        <end position="15"/>
    </location>
</feature>
<feature type="chain" id="PRO_0000391386" description="Translocon-associated protein subunit beta">
    <location>
        <begin position="16"/>
        <end position="188"/>
    </location>
</feature>
<feature type="topological domain" description="Lumenal" evidence="2">
    <location>
        <begin position="16"/>
        <end position="151"/>
    </location>
</feature>
<feature type="transmembrane region" description="Helical" evidence="2">
    <location>
        <begin position="152"/>
        <end position="172"/>
    </location>
</feature>
<feature type="topological domain" description="Cytoplasmic" evidence="2">
    <location>
        <begin position="173"/>
        <end position="188"/>
    </location>
</feature>
<feature type="glycosylation site" description="N-linked (GlcNAc...) asparagine" evidence="3">
    <location>
        <position position="93"/>
    </location>
</feature>
<feature type="glycosylation site" description="N-linked (GlcNAc...) asparagine" evidence="2">
    <location>
        <position position="109"/>
    </location>
</feature>
<protein>
    <recommendedName>
        <fullName>Translocon-associated protein subunit beta</fullName>
    </recommendedName>
</protein>